<name>GRAH_HUMAN</name>
<keyword id="KW-0002">3D-structure</keyword>
<keyword id="KW-0025">Alternative splicing</keyword>
<keyword id="KW-0204">Cytolysis</keyword>
<keyword id="KW-1015">Disulfide bond</keyword>
<keyword id="KW-0325">Glycoprotein</keyword>
<keyword id="KW-0378">Hydrolase</keyword>
<keyword id="KW-0458">Lysosome</keyword>
<keyword id="KW-0645">Protease</keyword>
<keyword id="KW-1267">Proteomics identification</keyword>
<keyword id="KW-1185">Reference proteome</keyword>
<keyword id="KW-0720">Serine protease</keyword>
<keyword id="KW-0732">Signal</keyword>
<keyword id="KW-0865">Zymogen</keyword>
<dbReference type="EC" id="3.4.21.-"/>
<dbReference type="EMBL" id="J02907">
    <property type="protein sequence ID" value="AAA76859.1"/>
    <property type="molecule type" value="Genomic_DNA"/>
</dbReference>
<dbReference type="EMBL" id="M57888">
    <property type="protein sequence ID" value="AAA03514.1"/>
    <property type="molecule type" value="Genomic_DNA"/>
</dbReference>
<dbReference type="EMBL" id="M36118">
    <property type="protein sequence ID" value="AAA03248.1"/>
    <property type="molecule type" value="mRNA"/>
</dbReference>
<dbReference type="EMBL" id="M72150">
    <property type="protein sequence ID" value="AAA74885.1"/>
    <property type="molecule type" value="Genomic_DNA"/>
</dbReference>
<dbReference type="EMBL" id="AY232657">
    <property type="protein sequence ID" value="AAP70247.1"/>
    <property type="molecule type" value="mRNA"/>
</dbReference>
<dbReference type="EMBL" id="AY232658">
    <property type="protein sequence ID" value="AAP70248.1"/>
    <property type="molecule type" value="mRNA"/>
</dbReference>
<dbReference type="EMBL" id="AL136018">
    <property type="status" value="NOT_ANNOTATED_CDS"/>
    <property type="molecule type" value="Genomic_DNA"/>
</dbReference>
<dbReference type="EMBL" id="CH471078">
    <property type="protein sequence ID" value="EAW66004.1"/>
    <property type="molecule type" value="Genomic_DNA"/>
</dbReference>
<dbReference type="EMBL" id="BC027974">
    <property type="protein sequence ID" value="AAH27974.1"/>
    <property type="molecule type" value="mRNA"/>
</dbReference>
<dbReference type="CCDS" id="CCDS59243.1">
    <molecule id="P20718-2"/>
</dbReference>
<dbReference type="CCDS" id="CCDS9632.1">
    <molecule id="P20718-1"/>
</dbReference>
<dbReference type="PIR" id="A32692">
    <property type="entry name" value="A32692"/>
</dbReference>
<dbReference type="RefSeq" id="NP_001257710.1">
    <molecule id="P20718-2"/>
    <property type="nucleotide sequence ID" value="NM_001270781.2"/>
</dbReference>
<dbReference type="RefSeq" id="NP_219491.1">
    <molecule id="P20718-1"/>
    <property type="nucleotide sequence ID" value="NM_033423.5"/>
</dbReference>
<dbReference type="PDB" id="3TJU">
    <property type="method" value="X-ray"/>
    <property type="resolution" value="2.70 A"/>
    <property type="chains" value="A=21-246"/>
</dbReference>
<dbReference type="PDB" id="3TJV">
    <property type="method" value="X-ray"/>
    <property type="resolution" value="2.40 A"/>
    <property type="chains" value="A=21-246"/>
</dbReference>
<dbReference type="PDB" id="3TK9">
    <property type="method" value="X-ray"/>
    <property type="resolution" value="2.20 A"/>
    <property type="chains" value="A=21-246"/>
</dbReference>
<dbReference type="PDB" id="4GAW">
    <property type="method" value="X-ray"/>
    <property type="resolution" value="3.00 A"/>
    <property type="chains" value="A/B/C/D/E/F/G/H/I/J/K/L=21-246"/>
</dbReference>
<dbReference type="PDBsum" id="3TJU"/>
<dbReference type="PDBsum" id="3TJV"/>
<dbReference type="PDBsum" id="3TK9"/>
<dbReference type="PDBsum" id="4GAW"/>
<dbReference type="SMR" id="P20718"/>
<dbReference type="BioGRID" id="109254">
    <property type="interactions" value="100"/>
</dbReference>
<dbReference type="FunCoup" id="P20718">
    <property type="interactions" value="79"/>
</dbReference>
<dbReference type="IntAct" id="P20718">
    <property type="interactions" value="71"/>
</dbReference>
<dbReference type="MINT" id="P20718"/>
<dbReference type="STRING" id="9606.ENSP00000216338"/>
<dbReference type="MEROPS" id="S01.147"/>
<dbReference type="GlyConnect" id="1291">
    <property type="glycosylation" value="1 N-Linked glycan (1 site)"/>
</dbReference>
<dbReference type="GlyCosmos" id="P20718">
    <property type="glycosylation" value="3 sites, 1 glycan"/>
</dbReference>
<dbReference type="GlyGen" id="P20718">
    <property type="glycosylation" value="4 sites, 6 N-linked glycans (2 sites), 1 O-linked glycan (1 site)"/>
</dbReference>
<dbReference type="iPTMnet" id="P20718"/>
<dbReference type="PhosphoSitePlus" id="P20718"/>
<dbReference type="BioMuta" id="GZMH"/>
<dbReference type="DMDM" id="121590"/>
<dbReference type="MassIVE" id="P20718"/>
<dbReference type="PaxDb" id="9606-ENSP00000216338"/>
<dbReference type="PeptideAtlas" id="P20718"/>
<dbReference type="ProteomicsDB" id="32592"/>
<dbReference type="ProteomicsDB" id="53779">
    <molecule id="P20718-1"/>
</dbReference>
<dbReference type="ProteomicsDB" id="67801"/>
<dbReference type="ProteomicsDB" id="67802"/>
<dbReference type="Antibodypedia" id="9278">
    <property type="antibodies" value="216 antibodies from 33 providers"/>
</dbReference>
<dbReference type="DNASU" id="2999"/>
<dbReference type="Ensembl" id="ENST00000216338.9">
    <molecule id="P20718-1"/>
    <property type="protein sequence ID" value="ENSP00000216338.4"/>
    <property type="gene ID" value="ENSG00000100450.13"/>
</dbReference>
<dbReference type="Ensembl" id="ENST00000382548.4">
    <molecule id="P20718-2"/>
    <property type="protein sequence ID" value="ENSP00000371988.4"/>
    <property type="gene ID" value="ENSG00000100450.13"/>
</dbReference>
<dbReference type="GeneID" id="2999"/>
<dbReference type="KEGG" id="hsa:2999"/>
<dbReference type="MANE-Select" id="ENST00000216338.9">
    <property type="protein sequence ID" value="ENSP00000216338.4"/>
    <property type="RefSeq nucleotide sequence ID" value="NM_033423.5"/>
    <property type="RefSeq protein sequence ID" value="NP_219491.1"/>
</dbReference>
<dbReference type="UCSC" id="uc001wpr.3">
    <molecule id="P20718-1"/>
    <property type="organism name" value="human"/>
</dbReference>
<dbReference type="AGR" id="HGNC:4710"/>
<dbReference type="CTD" id="2999"/>
<dbReference type="DisGeNET" id="2999"/>
<dbReference type="GeneCards" id="GZMH"/>
<dbReference type="HGNC" id="HGNC:4710">
    <property type="gene designation" value="GZMH"/>
</dbReference>
<dbReference type="HPA" id="ENSG00000100450">
    <property type="expression patterns" value="Tissue enhanced (bone marrow, lymphoid tissue)"/>
</dbReference>
<dbReference type="MIM" id="116831">
    <property type="type" value="gene"/>
</dbReference>
<dbReference type="neXtProt" id="NX_P20718"/>
<dbReference type="OpenTargets" id="ENSG00000100450"/>
<dbReference type="PharmGKB" id="PA29088"/>
<dbReference type="VEuPathDB" id="HostDB:ENSG00000100450"/>
<dbReference type="eggNOG" id="KOG3627">
    <property type="taxonomic scope" value="Eukaryota"/>
</dbReference>
<dbReference type="GeneTree" id="ENSGT01030000234551"/>
<dbReference type="HOGENOM" id="CLU_006842_1_0_1"/>
<dbReference type="InParanoid" id="P20718"/>
<dbReference type="OMA" id="DQECEYV"/>
<dbReference type="OrthoDB" id="5565075at2759"/>
<dbReference type="PAN-GO" id="P20718">
    <property type="GO annotations" value="2 GO annotations based on evolutionary models"/>
</dbReference>
<dbReference type="PhylomeDB" id="P20718"/>
<dbReference type="TreeFam" id="TF333630"/>
<dbReference type="BRENDA" id="3.4.21.B59">
    <property type="organism ID" value="2681"/>
</dbReference>
<dbReference type="PathwayCommons" id="P20718"/>
<dbReference type="Reactome" id="R-HSA-2022377">
    <property type="pathway name" value="Metabolism of Angiotensinogen to Angiotensins"/>
</dbReference>
<dbReference type="Reactome" id="R-HSA-381426">
    <property type="pathway name" value="Regulation of Insulin-like Growth Factor (IGF) transport and uptake by Insulin-like Growth Factor Binding Proteins (IGFBPs)"/>
</dbReference>
<dbReference type="SignaLink" id="P20718"/>
<dbReference type="BioGRID-ORCS" id="2999">
    <property type="hits" value="24 hits in 1152 CRISPR screens"/>
</dbReference>
<dbReference type="EvolutionaryTrace" id="P20718"/>
<dbReference type="GeneWiki" id="GZMH"/>
<dbReference type="GenomeRNAi" id="2999"/>
<dbReference type="Pharos" id="P20718">
    <property type="development level" value="Tbio"/>
</dbReference>
<dbReference type="PRO" id="PR:P20718"/>
<dbReference type="Proteomes" id="UP000005640">
    <property type="component" value="Chromosome 14"/>
</dbReference>
<dbReference type="RNAct" id="P20718">
    <property type="molecule type" value="protein"/>
</dbReference>
<dbReference type="Bgee" id="ENSG00000100450">
    <property type="expression patterns" value="Expressed in granulocyte and 111 other cell types or tissues"/>
</dbReference>
<dbReference type="ExpressionAtlas" id="P20718">
    <property type="expression patterns" value="baseline and differential"/>
</dbReference>
<dbReference type="GO" id="GO:0044194">
    <property type="term" value="C:cytolytic granule"/>
    <property type="evidence" value="ECO:0007669"/>
    <property type="project" value="UniProtKB-SubCell"/>
</dbReference>
<dbReference type="GO" id="GO:0005615">
    <property type="term" value="C:extracellular space"/>
    <property type="evidence" value="ECO:0000318"/>
    <property type="project" value="GO_Central"/>
</dbReference>
<dbReference type="GO" id="GO:0016020">
    <property type="term" value="C:membrane"/>
    <property type="evidence" value="ECO:0007005"/>
    <property type="project" value="UniProtKB"/>
</dbReference>
<dbReference type="GO" id="GO:0004252">
    <property type="term" value="F:serine-type endopeptidase activity"/>
    <property type="evidence" value="ECO:0000318"/>
    <property type="project" value="GO_Central"/>
</dbReference>
<dbReference type="GO" id="GO:0006915">
    <property type="term" value="P:apoptotic process"/>
    <property type="evidence" value="ECO:0000303"/>
    <property type="project" value="UniProtKB"/>
</dbReference>
<dbReference type="GO" id="GO:0031640">
    <property type="term" value="P:killing of cells of another organism"/>
    <property type="evidence" value="ECO:0007669"/>
    <property type="project" value="UniProtKB-KW"/>
</dbReference>
<dbReference type="GO" id="GO:0051604">
    <property type="term" value="P:protein maturation"/>
    <property type="evidence" value="ECO:0000318"/>
    <property type="project" value="GO_Central"/>
</dbReference>
<dbReference type="GO" id="GO:0006508">
    <property type="term" value="P:proteolysis"/>
    <property type="evidence" value="ECO:0007669"/>
    <property type="project" value="UniProtKB-KW"/>
</dbReference>
<dbReference type="CDD" id="cd00190">
    <property type="entry name" value="Tryp_SPc"/>
    <property type="match status" value="1"/>
</dbReference>
<dbReference type="FunFam" id="2.40.10.10:FF:000014">
    <property type="entry name" value="Complement factor D"/>
    <property type="match status" value="1"/>
</dbReference>
<dbReference type="FunFam" id="2.40.10.10:FF:000068">
    <property type="entry name" value="transmembrane protease serine 2"/>
    <property type="match status" value="1"/>
</dbReference>
<dbReference type="Gene3D" id="2.40.10.10">
    <property type="entry name" value="Trypsin-like serine proteases"/>
    <property type="match status" value="2"/>
</dbReference>
<dbReference type="InterPro" id="IPR009003">
    <property type="entry name" value="Peptidase_S1_PA"/>
</dbReference>
<dbReference type="InterPro" id="IPR043504">
    <property type="entry name" value="Peptidase_S1_PA_chymotrypsin"/>
</dbReference>
<dbReference type="InterPro" id="IPR001314">
    <property type="entry name" value="Peptidase_S1A"/>
</dbReference>
<dbReference type="InterPro" id="IPR001254">
    <property type="entry name" value="Trypsin_dom"/>
</dbReference>
<dbReference type="InterPro" id="IPR018114">
    <property type="entry name" value="TRYPSIN_HIS"/>
</dbReference>
<dbReference type="InterPro" id="IPR033116">
    <property type="entry name" value="TRYPSIN_SER"/>
</dbReference>
<dbReference type="PANTHER" id="PTHR24271:SF70">
    <property type="entry name" value="GRANZYME H"/>
    <property type="match status" value="1"/>
</dbReference>
<dbReference type="PANTHER" id="PTHR24271">
    <property type="entry name" value="KALLIKREIN-RELATED"/>
    <property type="match status" value="1"/>
</dbReference>
<dbReference type="Pfam" id="PF00089">
    <property type="entry name" value="Trypsin"/>
    <property type="match status" value="1"/>
</dbReference>
<dbReference type="PRINTS" id="PR00722">
    <property type="entry name" value="CHYMOTRYPSIN"/>
</dbReference>
<dbReference type="SMART" id="SM00020">
    <property type="entry name" value="Tryp_SPc"/>
    <property type="match status" value="1"/>
</dbReference>
<dbReference type="SUPFAM" id="SSF50494">
    <property type="entry name" value="Trypsin-like serine proteases"/>
    <property type="match status" value="1"/>
</dbReference>
<dbReference type="PROSITE" id="PS50240">
    <property type="entry name" value="TRYPSIN_DOM"/>
    <property type="match status" value="1"/>
</dbReference>
<dbReference type="PROSITE" id="PS00134">
    <property type="entry name" value="TRYPSIN_HIS"/>
    <property type="match status" value="1"/>
</dbReference>
<dbReference type="PROSITE" id="PS00135">
    <property type="entry name" value="TRYPSIN_SER"/>
    <property type="match status" value="1"/>
</dbReference>
<organism>
    <name type="scientific">Homo sapiens</name>
    <name type="common">Human</name>
    <dbReference type="NCBI Taxonomy" id="9606"/>
    <lineage>
        <taxon>Eukaryota</taxon>
        <taxon>Metazoa</taxon>
        <taxon>Chordata</taxon>
        <taxon>Craniata</taxon>
        <taxon>Vertebrata</taxon>
        <taxon>Euteleostomi</taxon>
        <taxon>Mammalia</taxon>
        <taxon>Eutheria</taxon>
        <taxon>Euarchontoglires</taxon>
        <taxon>Primates</taxon>
        <taxon>Haplorrhini</taxon>
        <taxon>Catarrhini</taxon>
        <taxon>Hominidae</taxon>
        <taxon>Homo</taxon>
    </lineage>
</organism>
<sequence>MQPFLLLLAFLLTPGAGTEEIIGGHEAKPHSRPYMAFVQFLQEKSRKRCGGILVRKDFVLTAAHCQGSSINVTLGAHNIKEQERTQQFIPVKRPIPHPAYNPKNFSNDIMLLQLERKAKWTTAVRPLRLPSSKAQVKPGQLCSVAGWGYVSMSTLATTLQEVLLTVQKDCQCERLFHGNYSRATEICVGDPKKTQTGFKGDSGGPLVCKDVAQGILSYGNKKGTPPGVYIKVSHFLPWIKRTMKRL</sequence>
<proteinExistence type="evidence at protein level"/>
<accession>P20718</accession>
<accession>G3V2C5</accession>
<accession>Q6XGZ0</accession>
<accession>Q6XGZ1</accession>
<gene>
    <name type="primary">GZMH</name>
    <name type="synonym">CGL2</name>
    <name type="synonym">CTSGL2</name>
</gene>
<evidence type="ECO:0000250" key="1"/>
<evidence type="ECO:0000255" key="2"/>
<evidence type="ECO:0000255" key="3">
    <source>
        <dbReference type="PROSITE-ProRule" id="PRU00274"/>
    </source>
</evidence>
<evidence type="ECO:0000269" key="4">
    <source>
    </source>
</evidence>
<evidence type="ECO:0000269" key="5">
    <source>
    </source>
</evidence>
<evidence type="ECO:0000303" key="6">
    <source ref="4"/>
</evidence>
<evidence type="ECO:0000305" key="7"/>
<evidence type="ECO:0007829" key="8">
    <source>
        <dbReference type="PDB" id="3TJV"/>
    </source>
</evidence>
<evidence type="ECO:0007829" key="9">
    <source>
        <dbReference type="PDB" id="3TK9"/>
    </source>
</evidence>
<evidence type="ECO:0007829" key="10">
    <source>
        <dbReference type="PDB" id="4GAW"/>
    </source>
</evidence>
<protein>
    <recommendedName>
        <fullName>Granzyme H</fullName>
        <ecNumber>3.4.21.-</ecNumber>
    </recommendedName>
    <alternativeName>
        <fullName>CCP-X</fullName>
    </alternativeName>
    <alternativeName>
        <fullName>Cathepsin G-like 2</fullName>
        <shortName>CTSGL2</shortName>
    </alternativeName>
    <alternativeName>
        <fullName>Cytotoxic T-lymphocyte proteinase</fullName>
    </alternativeName>
    <alternativeName>
        <fullName>Cytotoxic serine protease C</fullName>
        <shortName>CSP-C</shortName>
    </alternativeName>
</protein>
<comment type="function">
    <text evidence="4 5">Cytotoxic chymotrypsin-like serine protease with preference for bulky and aromatic residues at the P1 position and acidic residues at the P3' and P4' sites. Probably necessary for target cell lysis in cell-mediated immune responses. Participates in the antiviral response via direct cleavage of several proteins essential for viral replication.</text>
</comment>
<comment type="activity regulation">
    <text evidence="5">Inhibited by SERPINB1.</text>
</comment>
<comment type="subcellular location">
    <subcellularLocation>
        <location evidence="5">Cytolytic granule</location>
    </subcellularLocation>
</comment>
<comment type="alternative products">
    <event type="alternative splicing"/>
    <isoform>
        <id>P20718-1</id>
        <name>1</name>
        <sequence type="displayed"/>
    </isoform>
    <isoform>
        <id>P20718-2</id>
        <name>2</name>
        <sequence type="described" ref="VSP_047073"/>
    </isoform>
    <isoform>
        <id>P20718-3</id>
        <name>3</name>
        <sequence type="described" ref="VSP_047573"/>
    </isoform>
</comment>
<comment type="tissue specificity">
    <text evidence="5">Constitutively expressed in NK cells.</text>
</comment>
<comment type="similarity">
    <text evidence="3">Belongs to the peptidase S1 family. Granzyme subfamily.</text>
</comment>
<reference key="1">
    <citation type="journal article" date="1990" name="Biochemistry">
        <title>Cloning of a gene that encodes a new member of the human cytotoxic cell protease family.</title>
        <authorList>
            <person name="Meier M."/>
            <person name="Kwong P.C."/>
            <person name="Fregeau C.J."/>
            <person name="Atkinson E.A."/>
            <person name="Burrington M."/>
            <person name="Ehrman N."/>
            <person name="Sorensen O."/>
            <person name="Lin C.C."/>
            <person name="Wilkins J."/>
            <person name="Bleackley R.C."/>
        </authorList>
    </citation>
    <scope>NUCLEOTIDE SEQUENCE [GENOMIC DNA]</scope>
</reference>
<reference key="2">
    <citation type="journal article" date="1991" name="Int. Immunol.">
        <title>Structure and evolutionary origin of the human granzyme H gene.</title>
        <authorList>
            <person name="Haddad P."/>
            <person name="Jenne D.E."/>
            <person name="Tschopp J."/>
            <person name="Clement M.-V."/>
            <person name="Mathieu-Mahul D."/>
            <person name="Sasportes M."/>
        </authorList>
    </citation>
    <scope>NUCLEOTIDE SEQUENCE [GENOMIC DNA]</scope>
</reference>
<reference key="3">
    <citation type="journal article" date="1990" name="Tissue Antigens">
        <title>Characterization of a novel, human cytotoxic lymphocyte-specific serine protease cDNA clone (CSP-C).</title>
        <authorList>
            <person name="Klein J.L."/>
            <person name="Selvakumar A."/>
            <person name="Trapani J.A."/>
            <person name="Dupont B."/>
        </authorList>
    </citation>
    <scope>NUCLEOTIDE SEQUENCE [MRNA] (ISOFORM 1)</scope>
</reference>
<reference key="4">
    <citation type="submission" date="2003-02" db="EMBL/GenBank/DDBJ databases">
        <title>Identification and characterization of granzyme H splice variants 2 and 3 from large granular lymphocyte leukemia.</title>
        <authorList>
            <person name="Kothapalli R."/>
            <person name="Kusmartseva I."/>
            <person name="Loughran T.P. Jr."/>
        </authorList>
    </citation>
    <scope>NUCLEOTIDE SEQUENCE [MRNA] (ISOFORMS 2 AND 3)</scope>
    <source>
        <tissue>Leukemic T-cell</tissue>
    </source>
</reference>
<reference key="5">
    <citation type="journal article" date="2003" name="Nature">
        <title>The DNA sequence and analysis of human chromosome 14.</title>
        <authorList>
            <person name="Heilig R."/>
            <person name="Eckenberg R."/>
            <person name="Petit J.-L."/>
            <person name="Fonknechten N."/>
            <person name="Da Silva C."/>
            <person name="Cattolico L."/>
            <person name="Levy M."/>
            <person name="Barbe V."/>
            <person name="De Berardinis V."/>
            <person name="Ureta-Vidal A."/>
            <person name="Pelletier E."/>
            <person name="Vico V."/>
            <person name="Anthouard V."/>
            <person name="Rowen L."/>
            <person name="Madan A."/>
            <person name="Qin S."/>
            <person name="Sun H."/>
            <person name="Du H."/>
            <person name="Pepin K."/>
            <person name="Artiguenave F."/>
            <person name="Robert C."/>
            <person name="Cruaud C."/>
            <person name="Bruels T."/>
            <person name="Jaillon O."/>
            <person name="Friedlander L."/>
            <person name="Samson G."/>
            <person name="Brottier P."/>
            <person name="Cure S."/>
            <person name="Segurens B."/>
            <person name="Aniere F."/>
            <person name="Samain S."/>
            <person name="Crespeau H."/>
            <person name="Abbasi N."/>
            <person name="Aiach N."/>
            <person name="Boscus D."/>
            <person name="Dickhoff R."/>
            <person name="Dors M."/>
            <person name="Dubois I."/>
            <person name="Friedman C."/>
            <person name="Gouyvenoux M."/>
            <person name="James R."/>
            <person name="Madan A."/>
            <person name="Mairey-Estrada B."/>
            <person name="Mangenot S."/>
            <person name="Martins N."/>
            <person name="Menard M."/>
            <person name="Oztas S."/>
            <person name="Ratcliffe A."/>
            <person name="Shaffer T."/>
            <person name="Trask B."/>
            <person name="Vacherie B."/>
            <person name="Bellemere C."/>
            <person name="Belser C."/>
            <person name="Besnard-Gonnet M."/>
            <person name="Bartol-Mavel D."/>
            <person name="Boutard M."/>
            <person name="Briez-Silla S."/>
            <person name="Combette S."/>
            <person name="Dufosse-Laurent V."/>
            <person name="Ferron C."/>
            <person name="Lechaplais C."/>
            <person name="Louesse C."/>
            <person name="Muselet D."/>
            <person name="Magdelenat G."/>
            <person name="Pateau E."/>
            <person name="Petit E."/>
            <person name="Sirvain-Trukniewicz P."/>
            <person name="Trybou A."/>
            <person name="Vega-Czarny N."/>
            <person name="Bataille E."/>
            <person name="Bluet E."/>
            <person name="Bordelais I."/>
            <person name="Dubois M."/>
            <person name="Dumont C."/>
            <person name="Guerin T."/>
            <person name="Haffray S."/>
            <person name="Hammadi R."/>
            <person name="Muanga J."/>
            <person name="Pellouin V."/>
            <person name="Robert D."/>
            <person name="Wunderle E."/>
            <person name="Gauguet G."/>
            <person name="Roy A."/>
            <person name="Sainte-Marthe L."/>
            <person name="Verdier J."/>
            <person name="Verdier-Discala C."/>
            <person name="Hillier L.W."/>
            <person name="Fulton L."/>
            <person name="McPherson J."/>
            <person name="Matsuda F."/>
            <person name="Wilson R."/>
            <person name="Scarpelli C."/>
            <person name="Gyapay G."/>
            <person name="Wincker P."/>
            <person name="Saurin W."/>
            <person name="Quetier F."/>
            <person name="Waterston R."/>
            <person name="Hood L."/>
            <person name="Weissenbach J."/>
        </authorList>
    </citation>
    <scope>NUCLEOTIDE SEQUENCE [LARGE SCALE GENOMIC DNA]</scope>
</reference>
<reference key="6">
    <citation type="submission" date="2005-09" db="EMBL/GenBank/DDBJ databases">
        <authorList>
            <person name="Mural R.J."/>
            <person name="Istrail S."/>
            <person name="Sutton G.G."/>
            <person name="Florea L."/>
            <person name="Halpern A.L."/>
            <person name="Mobarry C.M."/>
            <person name="Lippert R."/>
            <person name="Walenz B."/>
            <person name="Shatkay H."/>
            <person name="Dew I."/>
            <person name="Miller J.R."/>
            <person name="Flanigan M.J."/>
            <person name="Edwards N.J."/>
            <person name="Bolanos R."/>
            <person name="Fasulo D."/>
            <person name="Halldorsson B.V."/>
            <person name="Hannenhalli S."/>
            <person name="Turner R."/>
            <person name="Yooseph S."/>
            <person name="Lu F."/>
            <person name="Nusskern D.R."/>
            <person name="Shue B.C."/>
            <person name="Zheng X.H."/>
            <person name="Zhong F."/>
            <person name="Delcher A.L."/>
            <person name="Huson D.H."/>
            <person name="Kravitz S.A."/>
            <person name="Mouchard L."/>
            <person name="Reinert K."/>
            <person name="Remington K.A."/>
            <person name="Clark A.G."/>
            <person name="Waterman M.S."/>
            <person name="Eichler E.E."/>
            <person name="Adams M.D."/>
            <person name="Hunkapiller M.W."/>
            <person name="Myers E.W."/>
            <person name="Venter J.C."/>
        </authorList>
    </citation>
    <scope>NUCLEOTIDE SEQUENCE [LARGE SCALE GENOMIC DNA]</scope>
</reference>
<reference key="7">
    <citation type="journal article" date="2004" name="Genome Res.">
        <title>The status, quality, and expansion of the NIH full-length cDNA project: the Mammalian Gene Collection (MGC).</title>
        <authorList>
            <consortium name="The MGC Project Team"/>
        </authorList>
    </citation>
    <scope>NUCLEOTIDE SEQUENCE [LARGE SCALE MRNA] (ISOFORM 1)</scope>
    <source>
        <tissue>Pancreas</tissue>
    </source>
</reference>
<reference key="8">
    <citation type="journal article" date="2012" name="J. Immunol.">
        <title>Structural insights into the substrate specificity of human granzyme H: the functional roles of a novel RKR motif.</title>
        <authorList>
            <person name="Wang L."/>
            <person name="Zhang K."/>
            <person name="Wu L."/>
            <person name="Liu S."/>
            <person name="Zhang H."/>
            <person name="Zhou Q."/>
            <person name="Tong L."/>
            <person name="Sun F."/>
            <person name="Fan Z."/>
        </authorList>
    </citation>
    <scope>X-RAY CRYSTALLOGRAPHY (2.2 ANGSTROMS) OF 21-246 OF MUTANT ASN-102 ALONE AND IN COMPLEX WITH SUBSTRATE PEPTIDE AND INHIBITOR</scope>
    <scope>FUNCTION</scope>
    <scope>SUBSTRATE SPECIFICITY</scope>
    <scope>DISULFIDE BONDS</scope>
</reference>
<reference key="9">
    <citation type="journal article" date="2013" name="J. Immunol.">
        <title>Identification of SERPINB1 as a physiological inhibitor of human granzyme H.</title>
        <authorList>
            <person name="Wang L."/>
            <person name="Li Q."/>
            <person name="Wu L."/>
            <person name="Liu S."/>
            <person name="Zhang Y."/>
            <person name="Yang X."/>
            <person name="Zhu P."/>
            <person name="Zhang H."/>
            <person name="Zhang K."/>
            <person name="Lou J."/>
            <person name="Liu P."/>
            <person name="Tong L."/>
            <person name="Sun F."/>
            <person name="Fan Z."/>
        </authorList>
    </citation>
    <scope>X-RAY CRYSTALLOGRAPHY (3.0 ANGSTROMS) OF 21-246 IN COMPLEX WITH SERPINB1</scope>
    <scope>FUNCTION</scope>
    <scope>DISULFIDE BONDS</scope>
    <scope>TISSUE SPECIFICITY</scope>
    <scope>ACTIVITY REGULATION</scope>
    <scope>SUBCELLULAR LOCATION</scope>
</reference>
<feature type="signal peptide">
    <location>
        <begin position="1"/>
        <end position="18"/>
    </location>
</feature>
<feature type="propeptide" id="PRO_0000027413" description="Activation peptide">
    <location>
        <begin position="19"/>
        <end position="20"/>
    </location>
</feature>
<feature type="chain" id="PRO_0000027414" description="Granzyme H">
    <location>
        <begin position="21"/>
        <end position="246"/>
    </location>
</feature>
<feature type="domain" description="Peptidase S1" evidence="3">
    <location>
        <begin position="21"/>
        <end position="244"/>
    </location>
</feature>
<feature type="region of interest" description="Mediates the preference for acidic residues at the P3' and P4' sites">
    <location>
        <begin position="46"/>
        <end position="48"/>
    </location>
</feature>
<feature type="active site" description="Charge relay system" evidence="1">
    <location>
        <position position="64"/>
    </location>
</feature>
<feature type="active site" description="Charge relay system" evidence="1">
    <location>
        <position position="108"/>
    </location>
</feature>
<feature type="active site" description="Charge relay system" evidence="1">
    <location>
        <position position="202"/>
    </location>
</feature>
<feature type="glycosylation site" description="N-linked (GlcNAc...) asparagine" evidence="2">
    <location>
        <position position="71"/>
    </location>
</feature>
<feature type="glycosylation site" description="N-linked (GlcNAc...) asparagine" evidence="2">
    <location>
        <position position="104"/>
    </location>
</feature>
<feature type="glycosylation site" description="N-linked (GlcNAc...) asparagine" evidence="2">
    <location>
        <position position="179"/>
    </location>
</feature>
<feature type="disulfide bond">
    <location>
        <begin position="49"/>
        <end position="65"/>
    </location>
</feature>
<feature type="disulfide bond">
    <location>
        <begin position="142"/>
        <end position="208"/>
    </location>
</feature>
<feature type="disulfide bond">
    <location>
        <begin position="172"/>
        <end position="187"/>
    </location>
</feature>
<feature type="splice variant" id="VSP_047573" description="In isoform 3." evidence="6">
    <location>
        <begin position="69"/>
        <end position="199"/>
    </location>
</feature>
<feature type="splice variant" id="VSP_047073" description="In isoform 2." evidence="6">
    <location>
        <begin position="114"/>
        <end position="199"/>
    </location>
</feature>
<feature type="sequence variant" id="VAR_014556" description="In dbSNP:rs20545.">
    <original>R</original>
    <variation>Q</variation>
    <location>
        <position position="84"/>
    </location>
</feature>
<feature type="sequence conflict" description="In Ref. 4; AAP70248." evidence="7" ref="4">
    <original>S</original>
    <variation>R</variation>
    <location>
        <position position="68"/>
    </location>
</feature>
<feature type="strand" evidence="9">
    <location>
        <begin position="35"/>
        <end position="44"/>
    </location>
</feature>
<feature type="strand" evidence="9">
    <location>
        <begin position="46"/>
        <end position="55"/>
    </location>
</feature>
<feature type="strand" evidence="9">
    <location>
        <begin position="58"/>
        <end position="61"/>
    </location>
</feature>
<feature type="helix" evidence="8">
    <location>
        <begin position="63"/>
        <end position="65"/>
    </location>
</feature>
<feature type="strand" evidence="9">
    <location>
        <begin position="68"/>
        <end position="75"/>
    </location>
</feature>
<feature type="strand" evidence="9">
    <location>
        <begin position="87"/>
        <end position="96"/>
    </location>
</feature>
<feature type="helix" evidence="10">
    <location>
        <begin position="98"/>
        <end position="100"/>
    </location>
</feature>
<feature type="turn" evidence="9">
    <location>
        <begin position="102"/>
        <end position="105"/>
    </location>
</feature>
<feature type="strand" evidence="9">
    <location>
        <begin position="110"/>
        <end position="116"/>
    </location>
</feature>
<feature type="strand" evidence="10">
    <location>
        <begin position="121"/>
        <end position="123"/>
    </location>
</feature>
<feature type="strand" evidence="9">
    <location>
        <begin position="141"/>
        <end position="147"/>
    </location>
</feature>
<feature type="strand" evidence="9">
    <location>
        <begin position="149"/>
        <end position="153"/>
    </location>
</feature>
<feature type="strand" evidence="9">
    <location>
        <begin position="160"/>
        <end position="167"/>
    </location>
</feature>
<feature type="helix" evidence="9">
    <location>
        <begin position="169"/>
        <end position="175"/>
    </location>
</feature>
<feature type="turn" evidence="9">
    <location>
        <begin position="176"/>
        <end position="178"/>
    </location>
</feature>
<feature type="turn" evidence="9">
    <location>
        <begin position="182"/>
        <end position="184"/>
    </location>
</feature>
<feature type="strand" evidence="9">
    <location>
        <begin position="185"/>
        <end position="189"/>
    </location>
</feature>
<feature type="turn" evidence="9">
    <location>
        <begin position="199"/>
        <end position="203"/>
    </location>
</feature>
<feature type="strand" evidence="9">
    <location>
        <begin position="205"/>
        <end position="208"/>
    </location>
</feature>
<feature type="strand" evidence="9">
    <location>
        <begin position="211"/>
        <end position="218"/>
    </location>
</feature>
<feature type="strand" evidence="10">
    <location>
        <begin position="221"/>
        <end position="223"/>
    </location>
</feature>
<feature type="strand" evidence="9">
    <location>
        <begin position="227"/>
        <end position="231"/>
    </location>
</feature>
<feature type="turn" evidence="9">
    <location>
        <begin position="232"/>
        <end position="235"/>
    </location>
</feature>
<feature type="helix" evidence="9">
    <location>
        <begin position="236"/>
        <end position="244"/>
    </location>
</feature>